<comment type="catalytic activity">
    <reaction evidence="1">
        <text>tRNA(Gly) + glycine + ATP = glycyl-tRNA(Gly) + AMP + diphosphate</text>
        <dbReference type="Rhea" id="RHEA:16013"/>
        <dbReference type="Rhea" id="RHEA-COMP:9664"/>
        <dbReference type="Rhea" id="RHEA-COMP:9683"/>
        <dbReference type="ChEBI" id="CHEBI:30616"/>
        <dbReference type="ChEBI" id="CHEBI:33019"/>
        <dbReference type="ChEBI" id="CHEBI:57305"/>
        <dbReference type="ChEBI" id="CHEBI:78442"/>
        <dbReference type="ChEBI" id="CHEBI:78522"/>
        <dbReference type="ChEBI" id="CHEBI:456215"/>
        <dbReference type="EC" id="6.1.1.14"/>
    </reaction>
</comment>
<comment type="subunit">
    <text evidence="1">Tetramer of two alpha and two beta subunits.</text>
</comment>
<comment type="subcellular location">
    <subcellularLocation>
        <location evidence="1">Cytoplasm</location>
    </subcellularLocation>
</comment>
<comment type="similarity">
    <text evidence="1">Belongs to the class-II aminoacyl-tRNA synthetase family.</text>
</comment>
<evidence type="ECO:0000255" key="1">
    <source>
        <dbReference type="HAMAP-Rule" id="MF_00254"/>
    </source>
</evidence>
<protein>
    <recommendedName>
        <fullName evidence="1">Glycine--tRNA ligase alpha subunit</fullName>
        <ecNumber evidence="1">6.1.1.14</ecNumber>
    </recommendedName>
    <alternativeName>
        <fullName evidence="1">Glycyl-tRNA synthetase alpha subunit</fullName>
        <shortName evidence="1">GlyRS</shortName>
    </alternativeName>
</protein>
<keyword id="KW-0030">Aminoacyl-tRNA synthetase</keyword>
<keyword id="KW-0067">ATP-binding</keyword>
<keyword id="KW-0963">Cytoplasm</keyword>
<keyword id="KW-0436">Ligase</keyword>
<keyword id="KW-0547">Nucleotide-binding</keyword>
<keyword id="KW-0648">Protein biosynthesis</keyword>
<keyword id="KW-1185">Reference proteome</keyword>
<proteinExistence type="inferred from homology"/>
<organism>
    <name type="scientific">Fusobacterium nucleatum subsp. nucleatum (strain ATCC 25586 / DSM 15643 / BCRC 10681 / CIP 101130 / JCM 8532 / KCTC 2640 / LMG 13131 / VPI 4355)</name>
    <dbReference type="NCBI Taxonomy" id="190304"/>
    <lineage>
        <taxon>Bacteria</taxon>
        <taxon>Fusobacteriati</taxon>
        <taxon>Fusobacteriota</taxon>
        <taxon>Fusobacteriia</taxon>
        <taxon>Fusobacteriales</taxon>
        <taxon>Fusobacteriaceae</taxon>
        <taxon>Fusobacterium</taxon>
    </lineage>
</organism>
<gene>
    <name evidence="1" type="primary">glyQ</name>
    <name type="ordered locus">FN0069</name>
</gene>
<dbReference type="EC" id="6.1.1.14" evidence="1"/>
<dbReference type="EMBL" id="AE009951">
    <property type="protein sequence ID" value="AAL94282.1"/>
    <property type="molecule type" value="Genomic_DNA"/>
</dbReference>
<dbReference type="RefSeq" id="NP_602983.1">
    <property type="nucleotide sequence ID" value="NC_003454.1"/>
</dbReference>
<dbReference type="RefSeq" id="WP_005903526.1">
    <property type="nucleotide sequence ID" value="NZ_OZ209243.1"/>
</dbReference>
<dbReference type="SMR" id="Q8RH45"/>
<dbReference type="FunCoup" id="Q8RH45">
    <property type="interactions" value="199"/>
</dbReference>
<dbReference type="STRING" id="190304.FN0069"/>
<dbReference type="PaxDb" id="190304-FN0069"/>
<dbReference type="EnsemblBacteria" id="AAL94282">
    <property type="protein sequence ID" value="AAL94282"/>
    <property type="gene ID" value="FN0069"/>
</dbReference>
<dbReference type="GeneID" id="79782801"/>
<dbReference type="KEGG" id="fnu:FN0069"/>
<dbReference type="PATRIC" id="fig|190304.8.peg.661"/>
<dbReference type="eggNOG" id="COG0752">
    <property type="taxonomic scope" value="Bacteria"/>
</dbReference>
<dbReference type="HOGENOM" id="CLU_057066_1_0_0"/>
<dbReference type="InParanoid" id="Q8RH45"/>
<dbReference type="BioCyc" id="FNUC190304:G1FZS-682-MONOMER"/>
<dbReference type="Proteomes" id="UP000002521">
    <property type="component" value="Chromosome"/>
</dbReference>
<dbReference type="GO" id="GO:0005737">
    <property type="term" value="C:cytoplasm"/>
    <property type="evidence" value="ECO:0007669"/>
    <property type="project" value="UniProtKB-SubCell"/>
</dbReference>
<dbReference type="GO" id="GO:0005524">
    <property type="term" value="F:ATP binding"/>
    <property type="evidence" value="ECO:0007669"/>
    <property type="project" value="UniProtKB-UniRule"/>
</dbReference>
<dbReference type="GO" id="GO:0004820">
    <property type="term" value="F:glycine-tRNA ligase activity"/>
    <property type="evidence" value="ECO:0007669"/>
    <property type="project" value="UniProtKB-UniRule"/>
</dbReference>
<dbReference type="GO" id="GO:0006426">
    <property type="term" value="P:glycyl-tRNA aminoacylation"/>
    <property type="evidence" value="ECO:0007669"/>
    <property type="project" value="UniProtKB-UniRule"/>
</dbReference>
<dbReference type="CDD" id="cd00733">
    <property type="entry name" value="GlyRS_alpha_core"/>
    <property type="match status" value="1"/>
</dbReference>
<dbReference type="FunFam" id="3.30.930.10:FF:000006">
    <property type="entry name" value="Glycine--tRNA ligase alpha subunit"/>
    <property type="match status" value="1"/>
</dbReference>
<dbReference type="Gene3D" id="3.30.930.10">
    <property type="entry name" value="Bira Bifunctional Protein, Domain 2"/>
    <property type="match status" value="1"/>
</dbReference>
<dbReference type="Gene3D" id="1.20.58.180">
    <property type="entry name" value="Class II aaRS and biotin synthetases, domain 2"/>
    <property type="match status" value="1"/>
</dbReference>
<dbReference type="HAMAP" id="MF_00254">
    <property type="entry name" value="Gly_tRNA_synth_alpha"/>
    <property type="match status" value="1"/>
</dbReference>
<dbReference type="InterPro" id="IPR045864">
    <property type="entry name" value="aa-tRNA-synth_II/BPL/LPL"/>
</dbReference>
<dbReference type="InterPro" id="IPR006194">
    <property type="entry name" value="Gly-tRNA-synth_heterodimer"/>
</dbReference>
<dbReference type="InterPro" id="IPR002310">
    <property type="entry name" value="Gly-tRNA_ligase_asu"/>
</dbReference>
<dbReference type="NCBIfam" id="TIGR00388">
    <property type="entry name" value="glyQ"/>
    <property type="match status" value="1"/>
</dbReference>
<dbReference type="NCBIfam" id="NF006827">
    <property type="entry name" value="PRK09348.1"/>
    <property type="match status" value="1"/>
</dbReference>
<dbReference type="PANTHER" id="PTHR30075:SF2">
    <property type="entry name" value="GLYCINE--TRNA LIGASE, CHLOROPLASTIC_MITOCHONDRIAL 2"/>
    <property type="match status" value="1"/>
</dbReference>
<dbReference type="PANTHER" id="PTHR30075">
    <property type="entry name" value="GLYCYL-TRNA SYNTHETASE"/>
    <property type="match status" value="1"/>
</dbReference>
<dbReference type="Pfam" id="PF02091">
    <property type="entry name" value="tRNA-synt_2e"/>
    <property type="match status" value="1"/>
</dbReference>
<dbReference type="PRINTS" id="PR01044">
    <property type="entry name" value="TRNASYNTHGA"/>
</dbReference>
<dbReference type="SUPFAM" id="SSF55681">
    <property type="entry name" value="Class II aaRS and biotin synthetases"/>
    <property type="match status" value="1"/>
</dbReference>
<dbReference type="PROSITE" id="PS50861">
    <property type="entry name" value="AA_TRNA_LIGASE_II_GLYAB"/>
    <property type="match status" value="1"/>
</dbReference>
<reference key="1">
    <citation type="journal article" date="2002" name="J. Bacteriol.">
        <title>Genome sequence and analysis of the oral bacterium Fusobacterium nucleatum strain ATCC 25586.</title>
        <authorList>
            <person name="Kapatral V."/>
            <person name="Anderson I."/>
            <person name="Ivanova N."/>
            <person name="Reznik G."/>
            <person name="Los T."/>
            <person name="Lykidis A."/>
            <person name="Bhattacharyya A."/>
            <person name="Bartman A."/>
            <person name="Gardner W."/>
            <person name="Grechkin G."/>
            <person name="Zhu L."/>
            <person name="Vasieva O."/>
            <person name="Chu L."/>
            <person name="Kogan Y."/>
            <person name="Chaga O."/>
            <person name="Goltsman E."/>
            <person name="Bernal A."/>
            <person name="Larsen N."/>
            <person name="D'Souza M."/>
            <person name="Walunas T."/>
            <person name="Pusch G."/>
            <person name="Haselkorn R."/>
            <person name="Fonstein M."/>
            <person name="Kyrpides N.C."/>
            <person name="Overbeek R."/>
        </authorList>
    </citation>
    <scope>NUCLEOTIDE SEQUENCE [LARGE SCALE GENOMIC DNA]</scope>
    <source>
        <strain>ATCC 25586 / DSM 15643 / BCRC 10681 / CIP 101130 / JCM 8532 / KCTC 2640 / LMG 13131 / VPI 4355</strain>
    </source>
</reference>
<accession>Q8RH45</accession>
<feature type="chain" id="PRO_0000072839" description="Glycine--tRNA ligase alpha subunit">
    <location>
        <begin position="1"/>
        <end position="290"/>
    </location>
</feature>
<sequence length="290" mass="33950">MTFQEIIFSLQQFWSSKGCIIGNPYDIEKGAGTFNPNTFLMSLGPEPWNVAYVEPSRRPKDGRYGDNPNRVYQHHQFQVIMKPSPTNIQELYLESLRVLGIEPEKHDIRFVEDDWESPTLGAWGLGWEVWLDGMEITQFTYFQQVGGLELEVIPVEITYGLERLALYIQNKENVYDLEWTKGVKYGDMRYQFEFENSKYSFELATLDKHFKWFDEYEEEAKKILDQGLVLPAYDYVLKCSHAFNVLDSRGAISTTERMGYILRVRNLARRCAEVFVENRKALGYPLLNKK</sequence>
<name>SYGA_FUSNN</name>